<proteinExistence type="inferred from homology"/>
<feature type="chain" id="PRO_1000008047" description="DNA mismatch repair protein MutS">
    <location>
        <begin position="1"/>
        <end position="862"/>
    </location>
</feature>
<feature type="binding site" evidence="1">
    <location>
        <begin position="608"/>
        <end position="615"/>
    </location>
    <ligand>
        <name>ATP</name>
        <dbReference type="ChEBI" id="CHEBI:30616"/>
    </ligand>
</feature>
<protein>
    <recommendedName>
        <fullName evidence="1">DNA mismatch repair protein MutS</fullName>
    </recommendedName>
</protein>
<reference key="1">
    <citation type="journal article" date="2006" name="BMC Genomics">
        <title>Comparative genome analysis: selection pressure on the Borrelia vls cassettes is essential for infectivity.</title>
        <authorList>
            <person name="Gloeckner G."/>
            <person name="Schulte-Spechtel U."/>
            <person name="Schilhabel M."/>
            <person name="Felder M."/>
            <person name="Suehnel J."/>
            <person name="Wilske B."/>
            <person name="Platzer M."/>
        </authorList>
    </citation>
    <scope>NUCLEOTIDE SEQUENCE [LARGE SCALE GENOMIC DNA]</scope>
    <source>
        <strain>PKo</strain>
    </source>
</reference>
<reference key="2">
    <citation type="journal article" date="2011" name="J. Bacteriol.">
        <title>Whole-genome sequences of two Borrelia afzelii and two Borrelia garinii Lyme disease agent isolates.</title>
        <authorList>
            <person name="Casjens S.R."/>
            <person name="Mongodin E.F."/>
            <person name="Qiu W.G."/>
            <person name="Dunn J.J."/>
            <person name="Luft B.J."/>
            <person name="Fraser-Liggett C.M."/>
            <person name="Schutzer S.E."/>
        </authorList>
    </citation>
    <scope>NUCLEOTIDE SEQUENCE [LARGE SCALE GENOMIC DNA]</scope>
    <source>
        <strain>PKo</strain>
    </source>
</reference>
<evidence type="ECO:0000255" key="1">
    <source>
        <dbReference type="HAMAP-Rule" id="MF_00096"/>
    </source>
</evidence>
<keyword id="KW-0067">ATP-binding</keyword>
<keyword id="KW-0227">DNA damage</keyword>
<keyword id="KW-0234">DNA repair</keyword>
<keyword id="KW-0238">DNA-binding</keyword>
<keyword id="KW-0547">Nucleotide-binding</keyword>
<organism>
    <name type="scientific">Borreliella afzelii (strain PKo)</name>
    <name type="common">Borrelia afzelii</name>
    <dbReference type="NCBI Taxonomy" id="390236"/>
    <lineage>
        <taxon>Bacteria</taxon>
        <taxon>Pseudomonadati</taxon>
        <taxon>Spirochaetota</taxon>
        <taxon>Spirochaetia</taxon>
        <taxon>Spirochaetales</taxon>
        <taxon>Borreliaceae</taxon>
        <taxon>Borreliella</taxon>
    </lineage>
</organism>
<name>MUTS_BORAP</name>
<dbReference type="EMBL" id="CP000395">
    <property type="protein sequence ID" value="ABH02074.1"/>
    <property type="molecule type" value="Genomic_DNA"/>
</dbReference>
<dbReference type="EMBL" id="CP002933">
    <property type="protein sequence ID" value="AEL70014.1"/>
    <property type="molecule type" value="Genomic_DNA"/>
</dbReference>
<dbReference type="RefSeq" id="WP_011601235.1">
    <property type="nucleotide sequence ID" value="NC_008277.1"/>
</dbReference>
<dbReference type="SMR" id="Q0SM54"/>
<dbReference type="STRING" id="29518.BLA32_00235"/>
<dbReference type="KEGG" id="baf:BAPKO_0850"/>
<dbReference type="KEGG" id="bafz:BafPKo_0825"/>
<dbReference type="PATRIC" id="fig|390236.22.peg.786"/>
<dbReference type="eggNOG" id="COG0249">
    <property type="taxonomic scope" value="Bacteria"/>
</dbReference>
<dbReference type="HOGENOM" id="CLU_002472_3_1_12"/>
<dbReference type="OrthoDB" id="9802448at2"/>
<dbReference type="Proteomes" id="UP000005216">
    <property type="component" value="Chromosome"/>
</dbReference>
<dbReference type="GO" id="GO:0005524">
    <property type="term" value="F:ATP binding"/>
    <property type="evidence" value="ECO:0007669"/>
    <property type="project" value="UniProtKB-UniRule"/>
</dbReference>
<dbReference type="GO" id="GO:0140664">
    <property type="term" value="F:ATP-dependent DNA damage sensor activity"/>
    <property type="evidence" value="ECO:0007669"/>
    <property type="project" value="InterPro"/>
</dbReference>
<dbReference type="GO" id="GO:0003684">
    <property type="term" value="F:damaged DNA binding"/>
    <property type="evidence" value="ECO:0007669"/>
    <property type="project" value="UniProtKB-UniRule"/>
</dbReference>
<dbReference type="GO" id="GO:0030983">
    <property type="term" value="F:mismatched DNA binding"/>
    <property type="evidence" value="ECO:0007669"/>
    <property type="project" value="InterPro"/>
</dbReference>
<dbReference type="GO" id="GO:0006298">
    <property type="term" value="P:mismatch repair"/>
    <property type="evidence" value="ECO:0007669"/>
    <property type="project" value="UniProtKB-UniRule"/>
</dbReference>
<dbReference type="CDD" id="cd03284">
    <property type="entry name" value="ABC_MutS1"/>
    <property type="match status" value="1"/>
</dbReference>
<dbReference type="Gene3D" id="1.10.1420.10">
    <property type="match status" value="2"/>
</dbReference>
<dbReference type="Gene3D" id="3.40.1170.10">
    <property type="entry name" value="DNA repair protein MutS, domain I"/>
    <property type="match status" value="1"/>
</dbReference>
<dbReference type="Gene3D" id="3.30.420.110">
    <property type="entry name" value="MutS, connector domain"/>
    <property type="match status" value="1"/>
</dbReference>
<dbReference type="Gene3D" id="3.40.50.300">
    <property type="entry name" value="P-loop containing nucleotide triphosphate hydrolases"/>
    <property type="match status" value="1"/>
</dbReference>
<dbReference type="HAMAP" id="MF_00096">
    <property type="entry name" value="MutS"/>
    <property type="match status" value="1"/>
</dbReference>
<dbReference type="InterPro" id="IPR005748">
    <property type="entry name" value="DNA_mismatch_repair_MutS"/>
</dbReference>
<dbReference type="InterPro" id="IPR007695">
    <property type="entry name" value="DNA_mismatch_repair_MutS-lik_N"/>
</dbReference>
<dbReference type="InterPro" id="IPR017261">
    <property type="entry name" value="DNA_mismatch_repair_MutS/MSH"/>
</dbReference>
<dbReference type="InterPro" id="IPR000432">
    <property type="entry name" value="DNA_mismatch_repair_MutS_C"/>
</dbReference>
<dbReference type="InterPro" id="IPR007861">
    <property type="entry name" value="DNA_mismatch_repair_MutS_clamp"/>
</dbReference>
<dbReference type="InterPro" id="IPR007696">
    <property type="entry name" value="DNA_mismatch_repair_MutS_core"/>
</dbReference>
<dbReference type="InterPro" id="IPR016151">
    <property type="entry name" value="DNA_mismatch_repair_MutS_N"/>
</dbReference>
<dbReference type="InterPro" id="IPR036187">
    <property type="entry name" value="DNA_mismatch_repair_MutS_sf"/>
</dbReference>
<dbReference type="InterPro" id="IPR007860">
    <property type="entry name" value="DNA_mmatch_repair_MutS_con_dom"/>
</dbReference>
<dbReference type="InterPro" id="IPR045076">
    <property type="entry name" value="MutS"/>
</dbReference>
<dbReference type="InterPro" id="IPR036678">
    <property type="entry name" value="MutS_con_dom_sf"/>
</dbReference>
<dbReference type="InterPro" id="IPR027417">
    <property type="entry name" value="P-loop_NTPase"/>
</dbReference>
<dbReference type="NCBIfam" id="TIGR01070">
    <property type="entry name" value="mutS1"/>
    <property type="match status" value="1"/>
</dbReference>
<dbReference type="NCBIfam" id="NF003810">
    <property type="entry name" value="PRK05399.1"/>
    <property type="match status" value="1"/>
</dbReference>
<dbReference type="PANTHER" id="PTHR11361:SF34">
    <property type="entry name" value="DNA MISMATCH REPAIR PROTEIN MSH1, MITOCHONDRIAL"/>
    <property type="match status" value="1"/>
</dbReference>
<dbReference type="PANTHER" id="PTHR11361">
    <property type="entry name" value="DNA MISMATCH REPAIR PROTEIN MUTS FAMILY MEMBER"/>
    <property type="match status" value="1"/>
</dbReference>
<dbReference type="Pfam" id="PF01624">
    <property type="entry name" value="MutS_I"/>
    <property type="match status" value="1"/>
</dbReference>
<dbReference type="Pfam" id="PF05188">
    <property type="entry name" value="MutS_II"/>
    <property type="match status" value="1"/>
</dbReference>
<dbReference type="Pfam" id="PF05192">
    <property type="entry name" value="MutS_III"/>
    <property type="match status" value="1"/>
</dbReference>
<dbReference type="Pfam" id="PF05190">
    <property type="entry name" value="MutS_IV"/>
    <property type="match status" value="1"/>
</dbReference>
<dbReference type="Pfam" id="PF00488">
    <property type="entry name" value="MutS_V"/>
    <property type="match status" value="1"/>
</dbReference>
<dbReference type="PIRSF" id="PIRSF037677">
    <property type="entry name" value="DNA_mis_repair_Msh6"/>
    <property type="match status" value="1"/>
</dbReference>
<dbReference type="SMART" id="SM00534">
    <property type="entry name" value="MUTSac"/>
    <property type="match status" value="1"/>
</dbReference>
<dbReference type="SMART" id="SM00533">
    <property type="entry name" value="MUTSd"/>
    <property type="match status" value="1"/>
</dbReference>
<dbReference type="SUPFAM" id="SSF55271">
    <property type="entry name" value="DNA repair protein MutS, domain I"/>
    <property type="match status" value="1"/>
</dbReference>
<dbReference type="SUPFAM" id="SSF53150">
    <property type="entry name" value="DNA repair protein MutS, domain II"/>
    <property type="match status" value="1"/>
</dbReference>
<dbReference type="SUPFAM" id="SSF48334">
    <property type="entry name" value="DNA repair protein MutS, domain III"/>
    <property type="match status" value="1"/>
</dbReference>
<dbReference type="SUPFAM" id="SSF52540">
    <property type="entry name" value="P-loop containing nucleoside triphosphate hydrolases"/>
    <property type="match status" value="1"/>
</dbReference>
<dbReference type="PROSITE" id="PS00486">
    <property type="entry name" value="DNA_MISMATCH_REPAIR_2"/>
    <property type="match status" value="1"/>
</dbReference>
<comment type="function">
    <text evidence="1">This protein is involved in the repair of mismatches in DNA. It is possible that it carries out the mismatch recognition step. This protein has a weak ATPase activity.</text>
</comment>
<comment type="similarity">
    <text evidence="1">Belongs to the DNA mismatch repair MutS family.</text>
</comment>
<accession>Q0SM54</accession>
<accession>G0IRX9</accession>
<sequence length="862" mass="99871">MEKNVTPMMRQYLDIKKKYKDAIIFFRVGNFYEMFFDDAIEASKLLNLTLTKRENVPMCGVPYHTSKEYIRKLILFDKKVAICEQAANSTSVGPLEREVVEVITPGVIVDEDFLNDDVNNYLVAISDYKNYYSFSYIDLSTSSLGIMFYENSFFEKLKRDLEKYSPKEIIVSENFYYEYSEKLNLNRFLINRVPAWHLDKDVAIKTIKEHFNILGLSSLGFDEEKPYYISIFLIINHIKNNLKNLLSNIDKIDINNDSLYMFLDDVTQVNLELVKNNNDFSSQYSLYSVLNDCKTAMGKRLLREFILNPILNIPEINTRLDHVEFFCKNISLTMTLREAFVNIWDVERIISRIQMKRYIKKDFLFIEKSLSVFFLVKKLFDKHNFDYWNFDKFEEDSISKVYFLINSAISSSSDELIKRGYDLKLDSLKDLKINANKYIDEYLESERLLSKINNLKIRKTNNRGLFFEVTKSNYAQVPPHFMESQTLNSSKRYKTEKLISLEANINNAEDSVVAFEQEIFDEIASNVVKHNKVLKKVAEFFAYIDLVVNFGYLAKKNEYKRPILTCSKEIFLEKSRHPVVEHYVKNTEIFTENFVKINKEKYFCLITGPNMAGKSTYLRQVALITLMAHIGSFVPASRAVIGITDKIFCRIGASDNLAKGESTFLVEMNETANILRNATEKSLIIMDEVGRGTSTNDGLAIAYSIIEYILEYIKARSLFATHFHELSAINHKAFINLSMKIEKQGNELVFLREVEEKPSLNSYGIYVARIAGLPLRVVDRANVILKSLGSRKDSSCLEFLPCISSDTCDREVLKNDTDVHVKLNEYLELKKFISNIDINNITPFQSIELLNQLVLKVISQSS</sequence>
<gene>
    <name evidence="1" type="primary">mutS</name>
    <name type="ordered locus">BAPKO_0850</name>
    <name type="ordered locus">BafPKo_0825</name>
</gene>